<protein>
    <recommendedName>
        <fullName evidence="2">Protein archease</fullName>
    </recommendedName>
</protein>
<sequence>MQCGGWMHEEHTADVLVIAYGRTLEEAFENAARGVYEVVTDTSRVEPRRRVDASIEGIDLENLLYRFIENLIAYTDSEGLVFGLFRVCKIECNGESCSIVASAWGEEFDPSRHEHRTIVKAMTYADMEIKEENGCWRVQFVVDI</sequence>
<proteinExistence type="inferred from homology"/>
<organism>
    <name type="scientific">Aeropyrum pernix (strain ATCC 700893 / DSM 11879 / JCM 9820 / NBRC 100138 / K1)</name>
    <dbReference type="NCBI Taxonomy" id="272557"/>
    <lineage>
        <taxon>Archaea</taxon>
        <taxon>Thermoproteota</taxon>
        <taxon>Thermoprotei</taxon>
        <taxon>Desulfurococcales</taxon>
        <taxon>Desulfurococcaceae</taxon>
        <taxon>Aeropyrum</taxon>
    </lineage>
</organism>
<name>ARCH_AERPE</name>
<keyword id="KW-0106">Calcium</keyword>
<keyword id="KW-0479">Metal-binding</keyword>
<keyword id="KW-1185">Reference proteome</keyword>
<keyword id="KW-0819">tRNA processing</keyword>
<dbReference type="EMBL" id="BA000002">
    <property type="protein sequence ID" value="BAA79059.2"/>
    <property type="molecule type" value="Genomic_DNA"/>
</dbReference>
<dbReference type="PIR" id="A72770">
    <property type="entry name" value="A72770"/>
</dbReference>
<dbReference type="RefSeq" id="WP_010865525.1">
    <property type="nucleotide sequence ID" value="NC_000854.2"/>
</dbReference>
<dbReference type="SMR" id="Q9YFV2"/>
<dbReference type="STRING" id="272557.APE_0148.1"/>
<dbReference type="EnsemblBacteria" id="BAA79059">
    <property type="protein sequence ID" value="BAA79059"/>
    <property type="gene ID" value="APE_0148.1"/>
</dbReference>
<dbReference type="GeneID" id="1445682"/>
<dbReference type="KEGG" id="ape:APE_0148.1"/>
<dbReference type="PATRIC" id="fig|272557.25.peg.103"/>
<dbReference type="eggNOG" id="arCOG04055">
    <property type="taxonomic scope" value="Archaea"/>
</dbReference>
<dbReference type="Proteomes" id="UP000002518">
    <property type="component" value="Chromosome"/>
</dbReference>
<dbReference type="GO" id="GO:0005509">
    <property type="term" value="F:calcium ion binding"/>
    <property type="evidence" value="ECO:0007669"/>
    <property type="project" value="UniProtKB-UniRule"/>
</dbReference>
<dbReference type="GO" id="GO:0006388">
    <property type="term" value="P:tRNA splicing, via endonucleolytic cleavage and ligation"/>
    <property type="evidence" value="ECO:0007669"/>
    <property type="project" value="UniProtKB-UniRule"/>
</dbReference>
<dbReference type="Gene3D" id="3.55.10.10">
    <property type="entry name" value="Archease domain"/>
    <property type="match status" value="1"/>
</dbReference>
<dbReference type="HAMAP" id="MF_01222">
    <property type="entry name" value="Archease_arch"/>
    <property type="match status" value="1"/>
</dbReference>
<dbReference type="InterPro" id="IPR002804">
    <property type="entry name" value="Archease"/>
</dbReference>
<dbReference type="InterPro" id="IPR022952">
    <property type="entry name" value="Archease_arc"/>
</dbReference>
<dbReference type="InterPro" id="IPR023572">
    <property type="entry name" value="Archease_dom"/>
</dbReference>
<dbReference type="InterPro" id="IPR036820">
    <property type="entry name" value="Archease_dom_sf"/>
</dbReference>
<dbReference type="NCBIfam" id="NF001617">
    <property type="entry name" value="PRK00407.1"/>
    <property type="match status" value="1"/>
</dbReference>
<dbReference type="PANTHER" id="PTHR12682">
    <property type="entry name" value="ARCHEASE"/>
    <property type="match status" value="1"/>
</dbReference>
<dbReference type="PANTHER" id="PTHR12682:SF11">
    <property type="entry name" value="PROTEIN ARCHEASE"/>
    <property type="match status" value="1"/>
</dbReference>
<dbReference type="Pfam" id="PF01951">
    <property type="entry name" value="Archease"/>
    <property type="match status" value="1"/>
</dbReference>
<dbReference type="SUPFAM" id="SSF69819">
    <property type="entry name" value="MTH1598-like"/>
    <property type="match status" value="1"/>
</dbReference>
<reference key="1">
    <citation type="journal article" date="1999" name="DNA Res.">
        <title>Complete genome sequence of an aerobic hyper-thermophilic crenarchaeon, Aeropyrum pernix K1.</title>
        <authorList>
            <person name="Kawarabayasi Y."/>
            <person name="Hino Y."/>
            <person name="Horikawa H."/>
            <person name="Yamazaki S."/>
            <person name="Haikawa Y."/>
            <person name="Jin-no K."/>
            <person name="Takahashi M."/>
            <person name="Sekine M."/>
            <person name="Baba S."/>
            <person name="Ankai A."/>
            <person name="Kosugi H."/>
            <person name="Hosoyama A."/>
            <person name="Fukui S."/>
            <person name="Nagai Y."/>
            <person name="Nishijima K."/>
            <person name="Nakazawa H."/>
            <person name="Takamiya M."/>
            <person name="Masuda S."/>
            <person name="Funahashi T."/>
            <person name="Tanaka T."/>
            <person name="Kudoh Y."/>
            <person name="Yamazaki J."/>
            <person name="Kushida N."/>
            <person name="Oguchi A."/>
            <person name="Aoki K."/>
            <person name="Kubota K."/>
            <person name="Nakamura Y."/>
            <person name="Nomura N."/>
            <person name="Sako Y."/>
            <person name="Kikuchi H."/>
        </authorList>
    </citation>
    <scope>NUCLEOTIDE SEQUENCE [LARGE SCALE GENOMIC DNA]</scope>
    <source>
        <strain>ATCC 700893 / DSM 11879 / JCM 9820 / NBRC 100138 / K1</strain>
    </source>
</reference>
<comment type="function">
    <text evidence="1">Activates the tRNA-splicing ligase complex by facilitating the enzymatic turnover of catalytic subunit RtcB. Acts by promoting the guanylylation of RtcB, a key intermediate step in tRNA ligation. Can also alter the NTP specificity of RtcB such that ATP, dGTP or ITP is used efficiently (By similarity).</text>
</comment>
<comment type="similarity">
    <text evidence="2">Belongs to the archease family.</text>
</comment>
<gene>
    <name type="ordered locus">APE_0148.1</name>
</gene>
<accession>Q9YFV2</accession>
<evidence type="ECO:0000250" key="1"/>
<evidence type="ECO:0000255" key="2">
    <source>
        <dbReference type="HAMAP-Rule" id="MF_01222"/>
    </source>
</evidence>
<feature type="chain" id="PRO_0000068840" description="Protein archease">
    <location>
        <begin position="1"/>
        <end position="144"/>
    </location>
</feature>
<feature type="binding site" evidence="1">
    <location>
        <position position="14"/>
    </location>
    <ligand>
        <name>Ca(2+)</name>
        <dbReference type="ChEBI" id="CHEBI:29108"/>
    </ligand>
</feature>
<feature type="binding site" evidence="1">
    <location>
        <position position="143"/>
    </location>
    <ligand>
        <name>Ca(2+)</name>
        <dbReference type="ChEBI" id="CHEBI:29108"/>
    </ligand>
</feature>
<feature type="binding site" evidence="1">
    <location>
        <position position="144"/>
    </location>
    <ligand>
        <name>Ca(2+)</name>
        <dbReference type="ChEBI" id="CHEBI:29108"/>
    </ligand>
</feature>